<organism>
    <name type="scientific">Prochlorococcus marinus (strain MIT 9211)</name>
    <dbReference type="NCBI Taxonomy" id="93059"/>
    <lineage>
        <taxon>Bacteria</taxon>
        <taxon>Bacillati</taxon>
        <taxon>Cyanobacteriota</taxon>
        <taxon>Cyanophyceae</taxon>
        <taxon>Synechococcales</taxon>
        <taxon>Prochlorococcaceae</taxon>
        <taxon>Prochlorococcus</taxon>
    </lineage>
</organism>
<gene>
    <name evidence="1" type="primary">leuA</name>
    <name type="ordered locus">P9211_11241</name>
</gene>
<feature type="chain" id="PRO_1000149244" description="2-isopropylmalate synthase">
    <location>
        <begin position="1"/>
        <end position="536"/>
    </location>
</feature>
<feature type="domain" description="Pyruvate carboxyltransferase" evidence="1">
    <location>
        <begin position="8"/>
        <end position="273"/>
    </location>
</feature>
<feature type="region of interest" description="Regulatory domain" evidence="1">
    <location>
        <begin position="408"/>
        <end position="536"/>
    </location>
</feature>
<feature type="binding site" evidence="1">
    <location>
        <position position="17"/>
    </location>
    <ligand>
        <name>Mn(2+)</name>
        <dbReference type="ChEBI" id="CHEBI:29035"/>
    </ligand>
</feature>
<feature type="binding site" evidence="1">
    <location>
        <position position="208"/>
    </location>
    <ligand>
        <name>Mn(2+)</name>
        <dbReference type="ChEBI" id="CHEBI:29035"/>
    </ligand>
</feature>
<feature type="binding site" evidence="1">
    <location>
        <position position="210"/>
    </location>
    <ligand>
        <name>Mn(2+)</name>
        <dbReference type="ChEBI" id="CHEBI:29035"/>
    </ligand>
</feature>
<feature type="binding site" evidence="1">
    <location>
        <position position="244"/>
    </location>
    <ligand>
        <name>Mn(2+)</name>
        <dbReference type="ChEBI" id="CHEBI:29035"/>
    </ligand>
</feature>
<accession>A9BB43</accession>
<dbReference type="EC" id="2.3.3.13" evidence="1"/>
<dbReference type="EMBL" id="CP000878">
    <property type="protein sequence ID" value="ABX09055.1"/>
    <property type="molecule type" value="Genomic_DNA"/>
</dbReference>
<dbReference type="RefSeq" id="WP_012195676.1">
    <property type="nucleotide sequence ID" value="NC_009976.1"/>
</dbReference>
<dbReference type="SMR" id="A9BB43"/>
<dbReference type="STRING" id="93059.P9211_11241"/>
<dbReference type="KEGG" id="pmj:P9211_11241"/>
<dbReference type="eggNOG" id="COG0119">
    <property type="taxonomic scope" value="Bacteria"/>
</dbReference>
<dbReference type="HOGENOM" id="CLU_022158_0_1_3"/>
<dbReference type="OrthoDB" id="9804858at2"/>
<dbReference type="UniPathway" id="UPA00048">
    <property type="reaction ID" value="UER00070"/>
</dbReference>
<dbReference type="Proteomes" id="UP000000788">
    <property type="component" value="Chromosome"/>
</dbReference>
<dbReference type="GO" id="GO:0005737">
    <property type="term" value="C:cytoplasm"/>
    <property type="evidence" value="ECO:0007669"/>
    <property type="project" value="UniProtKB-SubCell"/>
</dbReference>
<dbReference type="GO" id="GO:0003852">
    <property type="term" value="F:2-isopropylmalate synthase activity"/>
    <property type="evidence" value="ECO:0007669"/>
    <property type="project" value="UniProtKB-UniRule"/>
</dbReference>
<dbReference type="GO" id="GO:0003985">
    <property type="term" value="F:acetyl-CoA C-acetyltransferase activity"/>
    <property type="evidence" value="ECO:0007669"/>
    <property type="project" value="UniProtKB-UniRule"/>
</dbReference>
<dbReference type="GO" id="GO:0030145">
    <property type="term" value="F:manganese ion binding"/>
    <property type="evidence" value="ECO:0007669"/>
    <property type="project" value="UniProtKB-UniRule"/>
</dbReference>
<dbReference type="GO" id="GO:0009098">
    <property type="term" value="P:L-leucine biosynthetic process"/>
    <property type="evidence" value="ECO:0007669"/>
    <property type="project" value="UniProtKB-UniRule"/>
</dbReference>
<dbReference type="CDD" id="cd07940">
    <property type="entry name" value="DRE_TIM_IPMS"/>
    <property type="match status" value="1"/>
</dbReference>
<dbReference type="FunFam" id="1.10.238.260:FF:000001">
    <property type="entry name" value="2-isopropylmalate synthase"/>
    <property type="match status" value="1"/>
</dbReference>
<dbReference type="FunFam" id="3.20.20.70:FF:000010">
    <property type="entry name" value="2-isopropylmalate synthase"/>
    <property type="match status" value="1"/>
</dbReference>
<dbReference type="FunFam" id="3.30.160.270:FF:000001">
    <property type="entry name" value="2-isopropylmalate synthase"/>
    <property type="match status" value="1"/>
</dbReference>
<dbReference type="Gene3D" id="1.10.238.260">
    <property type="match status" value="1"/>
</dbReference>
<dbReference type="Gene3D" id="3.30.160.270">
    <property type="match status" value="1"/>
</dbReference>
<dbReference type="Gene3D" id="3.20.20.70">
    <property type="entry name" value="Aldolase class I"/>
    <property type="match status" value="1"/>
</dbReference>
<dbReference type="HAMAP" id="MF_01025">
    <property type="entry name" value="LeuA_type1"/>
    <property type="match status" value="1"/>
</dbReference>
<dbReference type="InterPro" id="IPR050073">
    <property type="entry name" value="2-IPM_HCS-like"/>
</dbReference>
<dbReference type="InterPro" id="IPR013709">
    <property type="entry name" value="2-isopropylmalate_synth_dimer"/>
</dbReference>
<dbReference type="InterPro" id="IPR002034">
    <property type="entry name" value="AIPM/Hcit_synth_CS"/>
</dbReference>
<dbReference type="InterPro" id="IPR013785">
    <property type="entry name" value="Aldolase_TIM"/>
</dbReference>
<dbReference type="InterPro" id="IPR054691">
    <property type="entry name" value="LeuA/HCS_post-cat"/>
</dbReference>
<dbReference type="InterPro" id="IPR036230">
    <property type="entry name" value="LeuA_allosteric_dom_sf"/>
</dbReference>
<dbReference type="InterPro" id="IPR005671">
    <property type="entry name" value="LeuA_bact_synth"/>
</dbReference>
<dbReference type="InterPro" id="IPR000891">
    <property type="entry name" value="PYR_CT"/>
</dbReference>
<dbReference type="NCBIfam" id="TIGR00973">
    <property type="entry name" value="leuA_bact"/>
    <property type="match status" value="1"/>
</dbReference>
<dbReference type="NCBIfam" id="NF002086">
    <property type="entry name" value="PRK00915.1-3"/>
    <property type="match status" value="1"/>
</dbReference>
<dbReference type="PANTHER" id="PTHR10277:SF9">
    <property type="entry name" value="2-ISOPROPYLMALATE SYNTHASE 1, CHLOROPLASTIC-RELATED"/>
    <property type="match status" value="1"/>
</dbReference>
<dbReference type="PANTHER" id="PTHR10277">
    <property type="entry name" value="HOMOCITRATE SYNTHASE-RELATED"/>
    <property type="match status" value="1"/>
</dbReference>
<dbReference type="Pfam" id="PF22617">
    <property type="entry name" value="HCS_D2"/>
    <property type="match status" value="1"/>
</dbReference>
<dbReference type="Pfam" id="PF00682">
    <property type="entry name" value="HMGL-like"/>
    <property type="match status" value="1"/>
</dbReference>
<dbReference type="Pfam" id="PF08502">
    <property type="entry name" value="LeuA_dimer"/>
    <property type="match status" value="1"/>
</dbReference>
<dbReference type="SMART" id="SM00917">
    <property type="entry name" value="LeuA_dimer"/>
    <property type="match status" value="1"/>
</dbReference>
<dbReference type="SUPFAM" id="SSF110921">
    <property type="entry name" value="2-isopropylmalate synthase LeuA, allosteric (dimerisation) domain"/>
    <property type="match status" value="1"/>
</dbReference>
<dbReference type="SUPFAM" id="SSF51569">
    <property type="entry name" value="Aldolase"/>
    <property type="match status" value="1"/>
</dbReference>
<dbReference type="PROSITE" id="PS00815">
    <property type="entry name" value="AIPM_HOMOCIT_SYNTH_1"/>
    <property type="match status" value="1"/>
</dbReference>
<dbReference type="PROSITE" id="PS00816">
    <property type="entry name" value="AIPM_HOMOCIT_SYNTH_2"/>
    <property type="match status" value="1"/>
</dbReference>
<dbReference type="PROSITE" id="PS50991">
    <property type="entry name" value="PYR_CT"/>
    <property type="match status" value="1"/>
</dbReference>
<protein>
    <recommendedName>
        <fullName evidence="1">2-isopropylmalate synthase</fullName>
        <ecNumber evidence="1">2.3.3.13</ecNumber>
    </recommendedName>
    <alternativeName>
        <fullName evidence="1">Alpha-IPM synthase</fullName>
    </alternativeName>
    <alternativeName>
        <fullName evidence="1">Alpha-isopropylmalate synthase</fullName>
    </alternativeName>
</protein>
<name>LEU1_PROM4</name>
<reference key="1">
    <citation type="journal article" date="2007" name="PLoS Genet.">
        <title>Patterns and implications of gene gain and loss in the evolution of Prochlorococcus.</title>
        <authorList>
            <person name="Kettler G.C."/>
            <person name="Martiny A.C."/>
            <person name="Huang K."/>
            <person name="Zucker J."/>
            <person name="Coleman M.L."/>
            <person name="Rodrigue S."/>
            <person name="Chen F."/>
            <person name="Lapidus A."/>
            <person name="Ferriera S."/>
            <person name="Johnson J."/>
            <person name="Steglich C."/>
            <person name="Church G.M."/>
            <person name="Richardson P."/>
            <person name="Chisholm S.W."/>
        </authorList>
    </citation>
    <scope>NUCLEOTIDE SEQUENCE [LARGE SCALE GENOMIC DNA]</scope>
    <source>
        <strain>MIT 9211</strain>
    </source>
</reference>
<sequence length="536" mass="58100">MAKDPGRVLIFDTTLRDGEQSPGASLNLEEKLAIAQQLARLGVDIIEAGFPYASQGDFTAVQRIAEQVGGEEGPIICGLARASKADIKACGEAIAPAPKKRIHTFIATSDIHLEHKLRKTREEVIQIVPEMVHYAKSFSEDVEFSCEDAARSDPDFLYELIELAISAGAGTINIPDTVGYITPSEFGELIQGIDANVPNIDEAILSVHGHNDLGLAVANFLEAIKRGARQLECTINGIGERAGNAALEELVMALHVRRSFYNPFFGRDPESPTPLTAIRTEEITKTSRLVSNLTGMVVQPNKAIVGANAFAHESGIHQDGVLKNRLTYEIVDAKTVGLTDNRISLGKLSGRSAVRARLEELGYDLTRDDLNEAFAKFKDLADRKREITDRDLEAIVSEQVMQPDARFQLQLVQVSCGTTLKPTATVTLADQDGTEQTAVALGTGPVDAVCKALDSLAGESNELIEFSVKSVTEGIDALGEVTIRLRREGKIFSGHSADTDVVVAAAQAYVNALNRLIYFEKKNPIHPQHDLIKANL</sequence>
<evidence type="ECO:0000255" key="1">
    <source>
        <dbReference type="HAMAP-Rule" id="MF_01025"/>
    </source>
</evidence>
<comment type="function">
    <text evidence="1">Catalyzes the condensation of the acetyl group of acetyl-CoA with 3-methyl-2-oxobutanoate (2-ketoisovalerate) to form 3-carboxy-3-hydroxy-4-methylpentanoate (2-isopropylmalate).</text>
</comment>
<comment type="catalytic activity">
    <reaction evidence="1">
        <text>3-methyl-2-oxobutanoate + acetyl-CoA + H2O = (2S)-2-isopropylmalate + CoA + H(+)</text>
        <dbReference type="Rhea" id="RHEA:21524"/>
        <dbReference type="ChEBI" id="CHEBI:1178"/>
        <dbReference type="ChEBI" id="CHEBI:11851"/>
        <dbReference type="ChEBI" id="CHEBI:15377"/>
        <dbReference type="ChEBI" id="CHEBI:15378"/>
        <dbReference type="ChEBI" id="CHEBI:57287"/>
        <dbReference type="ChEBI" id="CHEBI:57288"/>
        <dbReference type="EC" id="2.3.3.13"/>
    </reaction>
</comment>
<comment type="cofactor">
    <cofactor evidence="1">
        <name>Mn(2+)</name>
        <dbReference type="ChEBI" id="CHEBI:29035"/>
    </cofactor>
</comment>
<comment type="pathway">
    <text evidence="1">Amino-acid biosynthesis; L-leucine biosynthesis; L-leucine from 3-methyl-2-oxobutanoate: step 1/4.</text>
</comment>
<comment type="subunit">
    <text evidence="1">Homodimer.</text>
</comment>
<comment type="subcellular location">
    <subcellularLocation>
        <location evidence="1">Cytoplasm</location>
    </subcellularLocation>
</comment>
<comment type="similarity">
    <text evidence="1">Belongs to the alpha-IPM synthase/homocitrate synthase family. LeuA type 1 subfamily.</text>
</comment>
<proteinExistence type="inferred from homology"/>
<keyword id="KW-0028">Amino-acid biosynthesis</keyword>
<keyword id="KW-0100">Branched-chain amino acid biosynthesis</keyword>
<keyword id="KW-0963">Cytoplasm</keyword>
<keyword id="KW-0432">Leucine biosynthesis</keyword>
<keyword id="KW-0464">Manganese</keyword>
<keyword id="KW-0479">Metal-binding</keyword>
<keyword id="KW-1185">Reference proteome</keyword>
<keyword id="KW-0808">Transferase</keyword>